<reference key="1">
    <citation type="journal article" date="2002" name="Nat. Neurosci.">
        <title>The olfactory receptor gene superfamily of the mouse.</title>
        <authorList>
            <person name="Zhang X."/>
            <person name="Firestein S."/>
        </authorList>
    </citation>
    <scope>NUCLEOTIDE SEQUENCE [GENOMIC DNA]</scope>
</reference>
<reference key="2">
    <citation type="journal article" date="2002" name="Hum. Mol. Genet.">
        <title>Different evolutionary processes shaped the mouse and human olfactory receptor gene families.</title>
        <authorList>
            <person name="Young J.M."/>
            <person name="Friedman C."/>
            <person name="Williams E.M."/>
            <person name="Ross J.A."/>
            <person name="Tonnes-Priddy L."/>
            <person name="Trask B.J."/>
        </authorList>
    </citation>
    <scope>NUCLEOTIDE SEQUENCE [GENOMIC DNA]</scope>
</reference>
<reference key="3">
    <citation type="journal article" date="2002" name="Hum. Mol. Genet.">
        <authorList>
            <person name="Young J.M."/>
            <person name="Friedman C."/>
            <person name="Williams E.M."/>
            <person name="Ross J.A."/>
            <person name="Tonnes-Priddy L."/>
            <person name="Trask B.J."/>
        </authorList>
    </citation>
    <scope>ERRATUM OF PUBMED:11875048</scope>
</reference>
<reference key="4">
    <citation type="journal article" date="2018" name="Chem. Senses">
        <title>A Multispecific Investigation of the Metal Effect in Mammalian Odorant Receptors for Sulfur-containing Compounds.</title>
        <authorList>
            <person name="Zhang R."/>
            <person name="Pan Y."/>
            <person name="Ahmed L."/>
            <person name="Block E."/>
            <person name="Zhang Y."/>
            <person name="Batista V.S."/>
            <person name="Zhuang H."/>
        </authorList>
    </citation>
    <scope>FUNCTION</scope>
    <scope>ACTIVITY REGULATION</scope>
    <scope>SUBCELLULAR LOCATION</scope>
    <scope>MUTAGENESIS OF CYS-203; MET-256 AND ARG-261</scope>
</reference>
<proteinExistence type="evidence at protein level"/>
<dbReference type="EMBL" id="AY073073">
    <property type="protein sequence ID" value="AAL60736.1"/>
    <property type="molecule type" value="Genomic_DNA"/>
</dbReference>
<dbReference type="EMBL" id="AY318214">
    <property type="protein sequence ID" value="AAP71469.1"/>
    <property type="molecule type" value="Genomic_DNA"/>
</dbReference>
<dbReference type="CCDS" id="CCDS16223.1"/>
<dbReference type="RefSeq" id="NP_667226.1">
    <property type="nucleotide sequence ID" value="NM_147015.1"/>
</dbReference>
<dbReference type="SMR" id="Q8VGS3"/>
<dbReference type="FunCoup" id="Q8VGS3">
    <property type="interactions" value="1614"/>
</dbReference>
<dbReference type="STRING" id="10090.ENSMUSP00000150622"/>
<dbReference type="GlyCosmos" id="Q8VGS3">
    <property type="glycosylation" value="1 site, No reported glycans"/>
</dbReference>
<dbReference type="GlyGen" id="Q8VGS3">
    <property type="glycosylation" value="1 site"/>
</dbReference>
<dbReference type="PhosphoSitePlus" id="Q8VGS3"/>
<dbReference type="PaxDb" id="10090-ENSMUSP00000099694"/>
<dbReference type="Antibodypedia" id="78755">
    <property type="antibodies" value="40 antibodies from 14 providers"/>
</dbReference>
<dbReference type="Ensembl" id="ENSMUST00000102634.2">
    <property type="protein sequence ID" value="ENSMUSP00000099694.2"/>
    <property type="gene ID" value="ENSMUSG00000075208.7"/>
</dbReference>
<dbReference type="Ensembl" id="ENSMUST00000213515.2">
    <property type="protein sequence ID" value="ENSMUSP00000150622.2"/>
    <property type="gene ID" value="ENSMUSG00000075208.7"/>
</dbReference>
<dbReference type="GeneID" id="259017"/>
<dbReference type="KEGG" id="mmu:259017"/>
<dbReference type="UCSC" id="uc008kkz.1">
    <property type="organism name" value="mouse"/>
</dbReference>
<dbReference type="AGR" id="MGI:3030853"/>
<dbReference type="CTD" id="219493"/>
<dbReference type="MGI" id="MGI:3030853">
    <property type="gene designation" value="Or5ar1"/>
</dbReference>
<dbReference type="VEuPathDB" id="HostDB:ENSMUSG00000075208"/>
<dbReference type="eggNOG" id="ENOG502SHXT">
    <property type="taxonomic scope" value="Eukaryota"/>
</dbReference>
<dbReference type="GeneTree" id="ENSGT01130000278309"/>
<dbReference type="HOGENOM" id="CLU_012526_1_2_1"/>
<dbReference type="InParanoid" id="Q8VGS3"/>
<dbReference type="OMA" id="FLTNHKV"/>
<dbReference type="OrthoDB" id="9615015at2759"/>
<dbReference type="PhylomeDB" id="Q8VGS3"/>
<dbReference type="TreeFam" id="TF352753"/>
<dbReference type="BioGRID-ORCS" id="259017">
    <property type="hits" value="3 hits in 71 CRISPR screens"/>
</dbReference>
<dbReference type="PRO" id="PR:Q8VGS3"/>
<dbReference type="Proteomes" id="UP000000589">
    <property type="component" value="Chromosome 2"/>
</dbReference>
<dbReference type="RNAct" id="Q8VGS3">
    <property type="molecule type" value="protein"/>
</dbReference>
<dbReference type="ExpressionAtlas" id="Q8VGS3">
    <property type="expression patterns" value="differential"/>
</dbReference>
<dbReference type="GO" id="GO:0016020">
    <property type="term" value="C:membrane"/>
    <property type="evidence" value="ECO:0000247"/>
    <property type="project" value="MGI"/>
</dbReference>
<dbReference type="GO" id="GO:0005886">
    <property type="term" value="C:plasma membrane"/>
    <property type="evidence" value="ECO:0000315"/>
    <property type="project" value="UniProtKB"/>
</dbReference>
<dbReference type="GO" id="GO:0005507">
    <property type="term" value="F:copper ion binding"/>
    <property type="evidence" value="ECO:0000315"/>
    <property type="project" value="UniProtKB"/>
</dbReference>
<dbReference type="GO" id="GO:0004930">
    <property type="term" value="F:G protein-coupled receptor activity"/>
    <property type="evidence" value="ECO:0007669"/>
    <property type="project" value="UniProtKB-KW"/>
</dbReference>
<dbReference type="GO" id="GO:0005549">
    <property type="term" value="F:odorant binding"/>
    <property type="evidence" value="ECO:0000315"/>
    <property type="project" value="UniProtKB"/>
</dbReference>
<dbReference type="GO" id="GO:0004984">
    <property type="term" value="F:olfactory receptor activity"/>
    <property type="evidence" value="ECO:0000315"/>
    <property type="project" value="UniProtKB"/>
</dbReference>
<dbReference type="GO" id="GO:0050907">
    <property type="term" value="P:detection of chemical stimulus involved in sensory perception"/>
    <property type="evidence" value="ECO:0000315"/>
    <property type="project" value="UniProtKB"/>
</dbReference>
<dbReference type="GO" id="GO:0007186">
    <property type="term" value="P:G protein-coupled receptor signaling pathway"/>
    <property type="evidence" value="ECO:0000247"/>
    <property type="project" value="MGI"/>
</dbReference>
<dbReference type="GO" id="GO:0007608">
    <property type="term" value="P:sensory perception of smell"/>
    <property type="evidence" value="ECO:0000247"/>
    <property type="project" value="MGI"/>
</dbReference>
<dbReference type="CDD" id="cd15944">
    <property type="entry name" value="7tmA_OR5AR1-like"/>
    <property type="match status" value="1"/>
</dbReference>
<dbReference type="FunFam" id="1.20.1070.10:FF:000003">
    <property type="entry name" value="Olfactory receptor"/>
    <property type="match status" value="1"/>
</dbReference>
<dbReference type="Gene3D" id="1.20.1070.10">
    <property type="entry name" value="Rhodopsin 7-helix transmembrane proteins"/>
    <property type="match status" value="1"/>
</dbReference>
<dbReference type="InterPro" id="IPR000276">
    <property type="entry name" value="GPCR_Rhodpsn"/>
</dbReference>
<dbReference type="InterPro" id="IPR017452">
    <property type="entry name" value="GPCR_Rhodpsn_7TM"/>
</dbReference>
<dbReference type="InterPro" id="IPR000725">
    <property type="entry name" value="Olfact_rcpt"/>
</dbReference>
<dbReference type="PANTHER" id="PTHR48018">
    <property type="entry name" value="OLFACTORY RECEPTOR"/>
    <property type="match status" value="1"/>
</dbReference>
<dbReference type="Pfam" id="PF13853">
    <property type="entry name" value="7tm_4"/>
    <property type="match status" value="1"/>
</dbReference>
<dbReference type="PRINTS" id="PR00237">
    <property type="entry name" value="GPCRRHODOPSN"/>
</dbReference>
<dbReference type="PRINTS" id="PR00245">
    <property type="entry name" value="OLFACTORYR"/>
</dbReference>
<dbReference type="SUPFAM" id="SSF81321">
    <property type="entry name" value="Family A G protein-coupled receptor-like"/>
    <property type="match status" value="1"/>
</dbReference>
<dbReference type="PROSITE" id="PS00237">
    <property type="entry name" value="G_PROTEIN_RECEP_F1_1"/>
    <property type="match status" value="1"/>
</dbReference>
<dbReference type="PROSITE" id="PS50262">
    <property type="entry name" value="G_PROTEIN_RECEP_F1_2"/>
    <property type="match status" value="1"/>
</dbReference>
<protein>
    <recommendedName>
        <fullName evidence="4">Olfactory receptor 5AR1</fullName>
    </recommendedName>
    <alternativeName>
        <fullName>Olfactory receptor 1019</fullName>
    </alternativeName>
    <alternativeName>
        <fullName>Olfactory receptor 180-1</fullName>
    </alternativeName>
</protein>
<sequence>MDKENHSVVTEFVFMGITQDPQLQIIFFVVFLLVYLVNVIGNVGMIILIITDSQLHTPMYFFLCNLSFVDLGYSSAIAPRMLADFLTKHKVISFSSCATQFAFFVGFVDAECYVLAAMAYDRFVAICRPLHYSTLMSKKVCLVLMLGSYFAGLVSLVAHTSLTFSLSYCGSNIINHFFCEIPPLLALSCSDTYISEILLFSLCGFIEFSTILIIFISYAFILIAIIRIRSAEGRLKAFSTCGSHLTGVTLFYGTVMFMYLRPTSSYSLDQDKWASVFYTIIIPMLNPLIYSLRNKDVKAAFKKLIGKKPQ</sequence>
<organism>
    <name type="scientific">Mus musculus</name>
    <name type="common">Mouse</name>
    <dbReference type="NCBI Taxonomy" id="10090"/>
    <lineage>
        <taxon>Eukaryota</taxon>
        <taxon>Metazoa</taxon>
        <taxon>Chordata</taxon>
        <taxon>Craniata</taxon>
        <taxon>Vertebrata</taxon>
        <taxon>Euteleostomi</taxon>
        <taxon>Mammalia</taxon>
        <taxon>Eutheria</taxon>
        <taxon>Euarchontoglires</taxon>
        <taxon>Glires</taxon>
        <taxon>Rodentia</taxon>
        <taxon>Myomorpha</taxon>
        <taxon>Muroidea</taxon>
        <taxon>Muridae</taxon>
        <taxon>Murinae</taxon>
        <taxon>Mus</taxon>
        <taxon>Mus</taxon>
    </lineage>
</organism>
<comment type="function">
    <text evidence="3 4">Olfactory receptor that is activated by the binding of organosulfur odorants with thioether groups such as (methylthio)methanethiol (MTMT). The activity of this receptor is mediated by G proteins which activate adenylyl cyclase (Probable).</text>
</comment>
<comment type="activity regulation">
    <text evidence="3">Copper binding enhances receptor activity in response to odorant binding.</text>
</comment>
<comment type="subcellular location">
    <subcellularLocation>
        <location evidence="3">Cell membrane</location>
        <topology evidence="1">Multi-pass membrane protein</topology>
    </subcellularLocation>
</comment>
<comment type="similarity">
    <text evidence="2">Belongs to the G-protein coupled receptor 1 family.</text>
</comment>
<gene>
    <name evidence="6" type="primary">Or5ar1</name>
    <name evidence="6" type="synonym">Mor180-1</name>
    <name evidence="6" type="synonym">Olfr1019</name>
</gene>
<accession>Q8VGS3</accession>
<name>O5AR1_MOUSE</name>
<keyword id="KW-1003">Cell membrane</keyword>
<keyword id="KW-0186">Copper</keyword>
<keyword id="KW-1015">Disulfide bond</keyword>
<keyword id="KW-0297">G-protein coupled receptor</keyword>
<keyword id="KW-0325">Glycoprotein</keyword>
<keyword id="KW-0472">Membrane</keyword>
<keyword id="KW-0479">Metal-binding</keyword>
<keyword id="KW-0552">Olfaction</keyword>
<keyword id="KW-0675">Receptor</keyword>
<keyword id="KW-1185">Reference proteome</keyword>
<keyword id="KW-0716">Sensory transduction</keyword>
<keyword id="KW-0807">Transducer</keyword>
<keyword id="KW-0812">Transmembrane</keyword>
<keyword id="KW-1133">Transmembrane helix</keyword>
<evidence type="ECO:0000255" key="1"/>
<evidence type="ECO:0000255" key="2">
    <source>
        <dbReference type="PROSITE-ProRule" id="PRU00521"/>
    </source>
</evidence>
<evidence type="ECO:0000269" key="3">
    <source>
    </source>
</evidence>
<evidence type="ECO:0000305" key="4"/>
<evidence type="ECO:0000305" key="5">
    <source>
    </source>
</evidence>
<evidence type="ECO:0000312" key="6">
    <source>
        <dbReference type="MGI" id="MGI:3030853"/>
    </source>
</evidence>
<feature type="chain" id="PRO_0000150860" description="Olfactory receptor 5AR1">
    <location>
        <begin position="1"/>
        <end position="310"/>
    </location>
</feature>
<feature type="topological domain" description="Extracellular" evidence="1">
    <location>
        <begin position="1"/>
        <end position="25"/>
    </location>
</feature>
<feature type="transmembrane region" description="Helical; Name=1" evidence="1">
    <location>
        <begin position="26"/>
        <end position="46"/>
    </location>
</feature>
<feature type="topological domain" description="Cytoplasmic" evidence="1">
    <location>
        <begin position="47"/>
        <end position="54"/>
    </location>
</feature>
<feature type="transmembrane region" description="Helical; Name=2" evidence="1">
    <location>
        <begin position="55"/>
        <end position="75"/>
    </location>
</feature>
<feature type="topological domain" description="Extracellular" evidence="1">
    <location>
        <begin position="76"/>
        <end position="99"/>
    </location>
</feature>
<feature type="transmembrane region" description="Helical; Name=3" evidence="1">
    <location>
        <begin position="100"/>
        <end position="120"/>
    </location>
</feature>
<feature type="topological domain" description="Cytoplasmic" evidence="1">
    <location>
        <begin position="121"/>
        <end position="133"/>
    </location>
</feature>
<feature type="transmembrane region" description="Helical; Name=4" evidence="1">
    <location>
        <begin position="134"/>
        <end position="154"/>
    </location>
</feature>
<feature type="topological domain" description="Extracellular" evidence="1">
    <location>
        <begin position="155"/>
        <end position="196"/>
    </location>
</feature>
<feature type="transmembrane region" description="Helical; Name=5" evidence="1">
    <location>
        <begin position="197"/>
        <end position="217"/>
    </location>
</feature>
<feature type="topological domain" description="Cytoplasmic" evidence="1">
    <location>
        <begin position="218"/>
        <end position="237"/>
    </location>
</feature>
<feature type="transmembrane region" description="Helical; Name=6" evidence="1">
    <location>
        <begin position="238"/>
        <end position="258"/>
    </location>
</feature>
<feature type="topological domain" description="Extracellular" evidence="1">
    <location>
        <begin position="259"/>
        <end position="271"/>
    </location>
</feature>
<feature type="transmembrane region" description="Helical; Name=7" evidence="1">
    <location>
        <begin position="272"/>
        <end position="292"/>
    </location>
</feature>
<feature type="topological domain" description="Cytoplasmic" evidence="1">
    <location>
        <begin position="293"/>
        <end position="310"/>
    </location>
</feature>
<feature type="binding site" evidence="5">
    <location>
        <position position="203"/>
    </location>
    <ligand>
        <name>Cu cation</name>
        <dbReference type="ChEBI" id="CHEBI:23378"/>
    </ligand>
</feature>
<feature type="binding site" evidence="5">
    <location>
        <position position="256"/>
    </location>
    <ligand>
        <name>Cu cation</name>
        <dbReference type="ChEBI" id="CHEBI:23378"/>
    </ligand>
</feature>
<feature type="binding site" evidence="5">
    <location>
        <position position="261"/>
    </location>
    <ligand>
        <name>Cu cation</name>
        <dbReference type="ChEBI" id="CHEBI:23378"/>
    </ligand>
</feature>
<feature type="glycosylation site" description="N-linked (GlcNAc...) asparagine" evidence="1">
    <location>
        <position position="5"/>
    </location>
</feature>
<feature type="disulfide bond" evidence="2">
    <location>
        <begin position="97"/>
        <end position="189"/>
    </location>
</feature>
<feature type="mutagenesis site" description="No receptor activity in response to MTMT binding, even in the presence of copper." evidence="3">
    <original>C</original>
    <variation>S</variation>
    <location>
        <position position="203"/>
    </location>
</feature>
<feature type="mutagenesis site" description="Decreased receptor activity in response to MTMT binding, even in the presence of copper." evidence="3">
    <original>M</original>
    <variation>A</variation>
    <location>
        <position position="256"/>
    </location>
</feature>
<feature type="mutagenesis site" description="No receptor activity in response to MTMT binding, even in the presence of copper." evidence="3">
    <original>R</original>
    <variation>W</variation>
    <variation>H</variation>
    <variation>A</variation>
    <location>
        <position position="261"/>
    </location>
</feature>